<reference key="1">
    <citation type="journal article" date="2006" name="DNA Res.">
        <title>Genome sequence of the cat pathogen, Chlamydophila felis.</title>
        <authorList>
            <person name="Azuma Y."/>
            <person name="Hirakawa H."/>
            <person name="Yamashita A."/>
            <person name="Cai Y."/>
            <person name="Rahman M.A."/>
            <person name="Suzuki H."/>
            <person name="Mitaku S."/>
            <person name="Toh H."/>
            <person name="Goto S."/>
            <person name="Murakami T."/>
            <person name="Sugi K."/>
            <person name="Hayashi H."/>
            <person name="Fukushi H."/>
            <person name="Hattori M."/>
            <person name="Kuhara S."/>
            <person name="Shirai M."/>
        </authorList>
    </citation>
    <scope>NUCLEOTIDE SEQUENCE [LARGE SCALE GENOMIC DNA]</scope>
    <source>
        <strain>Fe/C-56</strain>
    </source>
</reference>
<organism>
    <name type="scientific">Chlamydia felis (strain Fe/C-56)</name>
    <name type="common">Chlamydophila felis</name>
    <dbReference type="NCBI Taxonomy" id="264202"/>
    <lineage>
        <taxon>Bacteria</taxon>
        <taxon>Pseudomonadati</taxon>
        <taxon>Chlamydiota</taxon>
        <taxon>Chlamydiia</taxon>
        <taxon>Chlamydiales</taxon>
        <taxon>Chlamydiaceae</taxon>
        <taxon>Chlamydia/Chlamydophila group</taxon>
        <taxon>Chlamydia</taxon>
    </lineage>
</organism>
<proteinExistence type="inferred from homology"/>
<accession>Q252X3</accession>
<comment type="function">
    <text evidence="1">Located on the platform of the 30S subunit, it bridges several disparate RNA helices of the 16S rRNA. Forms part of the Shine-Dalgarno cleft in the 70S ribosome.</text>
</comment>
<comment type="subunit">
    <text evidence="1">Part of the 30S ribosomal subunit. Interacts with proteins S7 and S18. Binds to IF-3.</text>
</comment>
<comment type="similarity">
    <text evidence="1">Belongs to the universal ribosomal protein uS11 family.</text>
</comment>
<keyword id="KW-0687">Ribonucleoprotein</keyword>
<keyword id="KW-0689">Ribosomal protein</keyword>
<keyword id="KW-0694">RNA-binding</keyword>
<keyword id="KW-0699">rRNA-binding</keyword>
<dbReference type="EMBL" id="AP006861">
    <property type="protein sequence ID" value="BAE81665.1"/>
    <property type="molecule type" value="Genomic_DNA"/>
</dbReference>
<dbReference type="RefSeq" id="WP_011458440.1">
    <property type="nucleotide sequence ID" value="NC_007899.1"/>
</dbReference>
<dbReference type="SMR" id="Q252X3"/>
<dbReference type="STRING" id="264202.CF0893"/>
<dbReference type="KEGG" id="cfe:CF0893"/>
<dbReference type="eggNOG" id="COG0100">
    <property type="taxonomic scope" value="Bacteria"/>
</dbReference>
<dbReference type="HOGENOM" id="CLU_072439_5_0_0"/>
<dbReference type="OrthoDB" id="9806415at2"/>
<dbReference type="Proteomes" id="UP000001260">
    <property type="component" value="Chromosome"/>
</dbReference>
<dbReference type="GO" id="GO:1990904">
    <property type="term" value="C:ribonucleoprotein complex"/>
    <property type="evidence" value="ECO:0007669"/>
    <property type="project" value="UniProtKB-KW"/>
</dbReference>
<dbReference type="GO" id="GO:0005840">
    <property type="term" value="C:ribosome"/>
    <property type="evidence" value="ECO:0007669"/>
    <property type="project" value="UniProtKB-KW"/>
</dbReference>
<dbReference type="GO" id="GO:0019843">
    <property type="term" value="F:rRNA binding"/>
    <property type="evidence" value="ECO:0007669"/>
    <property type="project" value="UniProtKB-UniRule"/>
</dbReference>
<dbReference type="GO" id="GO:0003735">
    <property type="term" value="F:structural constituent of ribosome"/>
    <property type="evidence" value="ECO:0007669"/>
    <property type="project" value="InterPro"/>
</dbReference>
<dbReference type="GO" id="GO:0006412">
    <property type="term" value="P:translation"/>
    <property type="evidence" value="ECO:0007669"/>
    <property type="project" value="UniProtKB-UniRule"/>
</dbReference>
<dbReference type="FunFam" id="3.30.420.80:FF:000004">
    <property type="entry name" value="30S ribosomal protein S11"/>
    <property type="match status" value="1"/>
</dbReference>
<dbReference type="Gene3D" id="3.30.420.80">
    <property type="entry name" value="Ribosomal protein S11"/>
    <property type="match status" value="1"/>
</dbReference>
<dbReference type="HAMAP" id="MF_01310">
    <property type="entry name" value="Ribosomal_uS11"/>
    <property type="match status" value="1"/>
</dbReference>
<dbReference type="InterPro" id="IPR001971">
    <property type="entry name" value="Ribosomal_uS11"/>
</dbReference>
<dbReference type="InterPro" id="IPR019981">
    <property type="entry name" value="Ribosomal_uS11_bac-type"/>
</dbReference>
<dbReference type="InterPro" id="IPR018102">
    <property type="entry name" value="Ribosomal_uS11_CS"/>
</dbReference>
<dbReference type="InterPro" id="IPR036967">
    <property type="entry name" value="Ribosomal_uS11_sf"/>
</dbReference>
<dbReference type="NCBIfam" id="NF003698">
    <property type="entry name" value="PRK05309.1"/>
    <property type="match status" value="1"/>
</dbReference>
<dbReference type="NCBIfam" id="TIGR03632">
    <property type="entry name" value="uS11_bact"/>
    <property type="match status" value="1"/>
</dbReference>
<dbReference type="PANTHER" id="PTHR11759">
    <property type="entry name" value="40S RIBOSOMAL PROTEIN S14/30S RIBOSOMAL PROTEIN S11"/>
    <property type="match status" value="1"/>
</dbReference>
<dbReference type="Pfam" id="PF00411">
    <property type="entry name" value="Ribosomal_S11"/>
    <property type="match status" value="1"/>
</dbReference>
<dbReference type="PIRSF" id="PIRSF002131">
    <property type="entry name" value="Ribosomal_S11"/>
    <property type="match status" value="1"/>
</dbReference>
<dbReference type="SUPFAM" id="SSF53137">
    <property type="entry name" value="Translational machinery components"/>
    <property type="match status" value="1"/>
</dbReference>
<dbReference type="PROSITE" id="PS00054">
    <property type="entry name" value="RIBOSOMAL_S11"/>
    <property type="match status" value="1"/>
</dbReference>
<sequence length="132" mass="13917">MVKHQTQKKGVKRKQLKNIPSGVVHVKATFNNTIVSITDPAGNVISWASAGKVGYSGSRKSSAFAATVAAQDAAKNAMNSGLKEVEVCLKGTGAGRESAVRALIAAGLVVSVIRDETPVPHNGCRPRKRRRV</sequence>
<protein>
    <recommendedName>
        <fullName evidence="1">Small ribosomal subunit protein uS11</fullName>
    </recommendedName>
    <alternativeName>
        <fullName evidence="2">30S ribosomal protein S11</fullName>
    </alternativeName>
</protein>
<feature type="chain" id="PRO_0000294735" description="Small ribosomal subunit protein uS11">
    <location>
        <begin position="1"/>
        <end position="132"/>
    </location>
</feature>
<evidence type="ECO:0000255" key="1">
    <source>
        <dbReference type="HAMAP-Rule" id="MF_01310"/>
    </source>
</evidence>
<evidence type="ECO:0000305" key="2"/>
<name>RS11_CHLFF</name>
<gene>
    <name evidence="1" type="primary">rpsK</name>
    <name type="ordered locus">CF0893</name>
</gene>